<proteinExistence type="inferred from homology"/>
<feature type="chain" id="PRO_0000126033" description="Small heat shock protein IbpB">
    <location>
        <begin position="1"/>
        <end position="142"/>
    </location>
</feature>
<feature type="domain" description="sHSP" evidence="2">
    <location>
        <begin position="26"/>
        <end position="137"/>
    </location>
</feature>
<reference key="1">
    <citation type="journal article" date="2004" name="Nat. Genet.">
        <title>Comparison of genome degradation in Paratyphi A and Typhi, human-restricted serovars of Salmonella enterica that cause typhoid.</title>
        <authorList>
            <person name="McClelland M."/>
            <person name="Sanderson K.E."/>
            <person name="Clifton S.W."/>
            <person name="Latreille P."/>
            <person name="Porwollik S."/>
            <person name="Sabo A."/>
            <person name="Meyer R."/>
            <person name="Bieri T."/>
            <person name="Ozersky P."/>
            <person name="McLellan M."/>
            <person name="Harkins C.R."/>
            <person name="Wang C."/>
            <person name="Nguyen C."/>
            <person name="Berghoff A."/>
            <person name="Elliott G."/>
            <person name="Kohlberg S."/>
            <person name="Strong C."/>
            <person name="Du F."/>
            <person name="Carter J."/>
            <person name="Kremizki C."/>
            <person name="Layman D."/>
            <person name="Leonard S."/>
            <person name="Sun H."/>
            <person name="Fulton L."/>
            <person name="Nash W."/>
            <person name="Miner T."/>
            <person name="Minx P."/>
            <person name="Delehaunty K."/>
            <person name="Fronick C."/>
            <person name="Magrini V."/>
            <person name="Nhan M."/>
            <person name="Warren W."/>
            <person name="Florea L."/>
            <person name="Spieth J."/>
            <person name="Wilson R.K."/>
        </authorList>
    </citation>
    <scope>NUCLEOTIDE SEQUENCE [LARGE SCALE GENOMIC DNA]</scope>
    <source>
        <strain>ATCC 9150 / SARB42</strain>
    </source>
</reference>
<keyword id="KW-0143">Chaperone</keyword>
<keyword id="KW-0963">Cytoplasm</keyword>
<keyword id="KW-0346">Stress response</keyword>
<gene>
    <name evidence="1" type="primary">ibpB</name>
    <name type="ordered locus">SPA3658</name>
</gene>
<organism>
    <name type="scientific">Salmonella paratyphi A (strain ATCC 9150 / SARB42)</name>
    <dbReference type="NCBI Taxonomy" id="295319"/>
    <lineage>
        <taxon>Bacteria</taxon>
        <taxon>Pseudomonadati</taxon>
        <taxon>Pseudomonadota</taxon>
        <taxon>Gammaproteobacteria</taxon>
        <taxon>Enterobacterales</taxon>
        <taxon>Enterobacteriaceae</taxon>
        <taxon>Salmonella</taxon>
    </lineage>
</organism>
<dbReference type="EMBL" id="CP000026">
    <property type="protein sequence ID" value="AAV79452.1"/>
    <property type="molecule type" value="Genomic_DNA"/>
</dbReference>
<dbReference type="RefSeq" id="WP_001246919.1">
    <property type="nucleotide sequence ID" value="NC_006511.1"/>
</dbReference>
<dbReference type="SMR" id="Q5PKS6"/>
<dbReference type="KEGG" id="spt:SPA3658"/>
<dbReference type="HOGENOM" id="CLU_046737_4_2_6"/>
<dbReference type="Proteomes" id="UP000008185">
    <property type="component" value="Chromosome"/>
</dbReference>
<dbReference type="GO" id="GO:0005737">
    <property type="term" value="C:cytoplasm"/>
    <property type="evidence" value="ECO:0007669"/>
    <property type="project" value="UniProtKB-SubCell"/>
</dbReference>
<dbReference type="GO" id="GO:0050821">
    <property type="term" value="P:protein stabilization"/>
    <property type="evidence" value="ECO:0007669"/>
    <property type="project" value="UniProtKB-UniRule"/>
</dbReference>
<dbReference type="CDD" id="cd06470">
    <property type="entry name" value="ACD_IbpA-B_like"/>
    <property type="match status" value="1"/>
</dbReference>
<dbReference type="Gene3D" id="2.60.40.790">
    <property type="match status" value="1"/>
</dbReference>
<dbReference type="HAMAP" id="MF_02001">
    <property type="entry name" value="HSP20_IbpB"/>
    <property type="match status" value="1"/>
</dbReference>
<dbReference type="InterPro" id="IPR002068">
    <property type="entry name" value="A-crystallin/Hsp20_dom"/>
</dbReference>
<dbReference type="InterPro" id="IPR037913">
    <property type="entry name" value="ACD_IbpA/B"/>
</dbReference>
<dbReference type="InterPro" id="IPR008978">
    <property type="entry name" value="HSP20-like_chaperone"/>
</dbReference>
<dbReference type="InterPro" id="IPR022848">
    <property type="entry name" value="HSP20_IbpB"/>
</dbReference>
<dbReference type="NCBIfam" id="NF008618">
    <property type="entry name" value="PRK11597.1"/>
    <property type="match status" value="1"/>
</dbReference>
<dbReference type="PANTHER" id="PTHR47062">
    <property type="match status" value="1"/>
</dbReference>
<dbReference type="PANTHER" id="PTHR47062:SF2">
    <property type="entry name" value="SMALL HEAT SHOCK PROTEIN IBPB"/>
    <property type="match status" value="1"/>
</dbReference>
<dbReference type="Pfam" id="PF00011">
    <property type="entry name" value="HSP20"/>
    <property type="match status" value="1"/>
</dbReference>
<dbReference type="SUPFAM" id="SSF49764">
    <property type="entry name" value="HSP20-like chaperones"/>
    <property type="match status" value="1"/>
</dbReference>
<dbReference type="PROSITE" id="PS01031">
    <property type="entry name" value="SHSP"/>
    <property type="match status" value="1"/>
</dbReference>
<evidence type="ECO:0000255" key="1">
    <source>
        <dbReference type="HAMAP-Rule" id="MF_02001"/>
    </source>
</evidence>
<evidence type="ECO:0000255" key="2">
    <source>
        <dbReference type="PROSITE-ProRule" id="PRU00285"/>
    </source>
</evidence>
<comment type="function">
    <text evidence="1">Associates with aggregated proteins, together with IbpA, to stabilize and protect them from irreversible denaturation and extensive proteolysis during heat shock and oxidative stress. Aggregated proteins bound to the IbpAB complex are more efficiently refolded and reactivated by the ATP-dependent chaperone systems ClpB and DnaK/DnaJ/GrpE. Its activity is ATP-independent.</text>
</comment>
<comment type="subunit">
    <text evidence="1">Homodimer. Forms homomultimers of about 100-150 subunits at optimal growth temperatures. Conformation changes to oligomers at high temperatures or high ionic concentrations. The decrease in size of the multimers is accompanied by an increase in chaperone activity.</text>
</comment>
<comment type="subcellular location">
    <subcellularLocation>
        <location evidence="1">Cytoplasm</location>
    </subcellularLocation>
</comment>
<comment type="domain">
    <text evidence="1">The N- and C-terminal flexible termini are involved in oligomerization and in the binding of non-native substrate proteins, and are essential for chaperone activity.</text>
</comment>
<comment type="similarity">
    <text evidence="1 2">Belongs to the small heat shock protein (HSP20) family.</text>
</comment>
<accession>Q5PKS6</accession>
<name>IBPB_SALPA</name>
<sequence length="142" mass="16084">MRNYDLSPLLRQWIGFDKLANALQNSGESQSFPPYNIEKSDDNHYRITLALAGFRQEDLDIQLEGTRLTVKGTPEQPENEPKWLHQGLVMQPFSLSFTLAENMEVSGATFTNGLLHIDLTRNEPETIAPQRIAINERSALNS</sequence>
<protein>
    <recommendedName>
        <fullName evidence="1">Small heat shock protein IbpB</fullName>
    </recommendedName>
    <alternativeName>
        <fullName evidence="1">16 kDa heat shock protein B</fullName>
    </alternativeName>
</protein>